<evidence type="ECO:0000250" key="1"/>
<evidence type="ECO:0000255" key="2"/>
<evidence type="ECO:0000255" key="3">
    <source>
        <dbReference type="PROSITE-ProRule" id="PRU10095"/>
    </source>
</evidence>
<evidence type="ECO:0000269" key="4">
    <source>
    </source>
</evidence>
<evidence type="ECO:0000269" key="5">
    <source>
    </source>
</evidence>
<evidence type="ECO:0000269" key="6">
    <source>
    </source>
</evidence>
<evidence type="ECO:0000269" key="7">
    <source>
    </source>
</evidence>
<evidence type="ECO:0000269" key="8">
    <source>
    </source>
</evidence>
<evidence type="ECO:0000305" key="9"/>
<evidence type="ECO:0007744" key="10">
    <source>
    </source>
</evidence>
<sequence>MWLAAAVPSLARRLLLLGPPPPPLLLLLSRSSRRRRRLHSLGLAAMPEKRPFERLPAEVSPINYSLCLKPDLLDFTFEGKLEAAAQVRQATNQIVMNCADIDIITASYAPEGDEEIHATGFNYQNEDEKVTLSFPSTLQTGTGTLKIDFVGELNDKMKGFYRSRYTTPAGEVRYAAVTQFEATDARRAFPCWDEPAIKATFDISLVVPKDRVALSNMNVIDRKPYPDDENLVEVKFARTPVMSTYLVAFVVGEYDFVETRSKDGVCVRVYTPVGKAEQGKFALEVAAKTLPFYKDYFNVPYPLPKIDLIAIADFAAGAMENWGLVTYRETALLIDPKNSCSSSRQWVALVVGHELAHQWFGNLVTMEWWTHLWLNEGFASWIEYLCVDHCFPEYDIWTQFVSADYTRAQELDALDNSHPIEVSVGHPSEVDEIFDAISYSKGASVIRMLHDYIGDKDFKKGMNMYLTKFQQKNAATEDLWESLESASGKPIAAVMNTWTKQMGFPLIYVEAEQVEDDRVLKLSQKKFCASGPYGGEDCPQWMVPITISTSEDPNQAKLKILMDKPEMSVVLKNVKPDQWVKLNLGTVGFYRTQYSSAMLESLLPGIRDLSLPPVDRLGLQNDLFSLARAGIISTVEVLKVMEAFVNEPNYTVWSDLSCNLGILSTLLSHTDFYEEIQEFVKDVFSPIGERLGWDPKPGEGHLDALLRGLVLGKLGKAGHKATLEEARRRFKEHVEGKQILSADLRSPVYLTVLKHGDGATLDIMLKLHKQADMQEEKNRIERVLGATLSPELIQKVLTFALSEEVRPQDTVSVIGGVAGGSKHGRKAAWKFIKDNWEELHNRYQGGFLISRLIKLSVEGFAVDKMAGEVKAFFESHPAPSAERTIQQCCENILLNAAWLKRDADSIHQYLLQRKTSPPSV</sequence>
<comment type="function">
    <text evidence="8">Aminopeptidase with broad substrate specificity for several peptides. Involved in proteolytic events essential for cell growth and viability. May act as regulator of neuropeptide activity. Plays a role in the antigen-processing pathway for MHC class I molecules. Involved in the N-terminal trimming of cytotoxic T-cell epitope precursors. Digests the poly-Q peptides found in many cellular proteins.</text>
</comment>
<comment type="catalytic activity">
    <reaction>
        <text>Release of an N-terminal amino acid, preferentially alanine, from a wide range of peptides, amides and arylamides.</text>
        <dbReference type="EC" id="3.4.11.14"/>
    </reaction>
</comment>
<comment type="cofactor">
    <cofactor evidence="1">
        <name>Zn(2+)</name>
        <dbReference type="ChEBI" id="CHEBI:29105"/>
    </cofactor>
    <text evidence="1">Binds 1 zinc ion per subunit.</text>
</comment>
<comment type="activity regulation">
    <text evidence="1">Strongly inhibited by bestatin, leuhistin, actinonin, amastatin, 1,10-phenanthroline, DFP, PCMBS, Zn(2+), Cd(2+), Co(2+), Cu(2+), Hg(2+), EDTA and puromycin. Not inhibited by PMSF, and only slightly inhibited by leupeptin and aprotinin. Activity is increased by Mg(2+) and Ca(2+) (By similarity).</text>
</comment>
<comment type="subunit">
    <text evidence="1">Monomer.</text>
</comment>
<comment type="subcellular location">
    <subcellularLocation>
        <location evidence="8">Cytoplasm</location>
        <location evidence="8">Cytosol</location>
    </subcellularLocation>
    <subcellularLocation>
        <location evidence="8">Nucleus</location>
    </subcellularLocation>
</comment>
<comment type="tissue specificity">
    <text evidence="4 6 8">Widely expressed. Highest expression in brain, particularly the striatum and hippocampus. Expressed in Sertoli cells.</text>
</comment>
<comment type="disruption phenotype">
    <text evidence="4 5 6 7">Mice exhibit dwarfism, increased anxiety, impaired pain responses and do not reproduce as well as wild-type mice. More MHC class I molecules are displayed on dendritic cell surfaces.</text>
</comment>
<comment type="similarity">
    <text evidence="9">Belongs to the peptidase M1 family.</text>
</comment>
<comment type="caution">
    <text evidence="9">It is uncertain whether Met-1 or Met-46 is the initiator.</text>
</comment>
<organism>
    <name type="scientific">Mus musculus</name>
    <name type="common">Mouse</name>
    <dbReference type="NCBI Taxonomy" id="10090"/>
    <lineage>
        <taxon>Eukaryota</taxon>
        <taxon>Metazoa</taxon>
        <taxon>Chordata</taxon>
        <taxon>Craniata</taxon>
        <taxon>Vertebrata</taxon>
        <taxon>Euteleostomi</taxon>
        <taxon>Mammalia</taxon>
        <taxon>Eutheria</taxon>
        <taxon>Euarchontoglires</taxon>
        <taxon>Glires</taxon>
        <taxon>Rodentia</taxon>
        <taxon>Myomorpha</taxon>
        <taxon>Muroidea</taxon>
        <taxon>Muridae</taxon>
        <taxon>Murinae</taxon>
        <taxon>Mus</taxon>
        <taxon>Mus</taxon>
    </lineage>
</organism>
<keyword id="KW-0031">Aminopeptidase</keyword>
<keyword id="KW-0963">Cytoplasm</keyword>
<keyword id="KW-0378">Hydrolase</keyword>
<keyword id="KW-0479">Metal-binding</keyword>
<keyword id="KW-0482">Metalloprotease</keyword>
<keyword id="KW-0944">Nitration</keyword>
<keyword id="KW-0539">Nucleus</keyword>
<keyword id="KW-0645">Protease</keyword>
<keyword id="KW-1185">Reference proteome</keyword>
<keyword id="KW-0862">Zinc</keyword>
<dbReference type="EC" id="3.4.11.14"/>
<dbReference type="EMBL" id="U35646">
    <property type="protein sequence ID" value="AAC52409.1"/>
    <property type="molecule type" value="mRNA"/>
</dbReference>
<dbReference type="EMBL" id="AL627445">
    <property type="status" value="NOT_ANNOTATED_CDS"/>
    <property type="molecule type" value="Genomic_DNA"/>
</dbReference>
<dbReference type="EMBL" id="CH466556">
    <property type="protein sequence ID" value="EDL16075.1"/>
    <property type="molecule type" value="Genomic_DNA"/>
</dbReference>
<dbReference type="EMBL" id="BC009653">
    <property type="protein sequence ID" value="AAH09653.1"/>
    <property type="molecule type" value="mRNA"/>
</dbReference>
<dbReference type="EMBL" id="BC086798">
    <property type="protein sequence ID" value="AAH86798.1"/>
    <property type="molecule type" value="mRNA"/>
</dbReference>
<dbReference type="EMBL" id="BC098212">
    <property type="protein sequence ID" value="AAH98212.1"/>
    <property type="molecule type" value="mRNA"/>
</dbReference>
<dbReference type="EMBL" id="AK133898">
    <property type="protein sequence ID" value="BAE21917.1"/>
    <property type="molecule type" value="mRNA"/>
</dbReference>
<dbReference type="CCDS" id="CCDS25317.1"/>
<dbReference type="PIR" id="T10052">
    <property type="entry name" value="T10052"/>
</dbReference>
<dbReference type="RefSeq" id="NP_032968.2">
    <property type="nucleotide sequence ID" value="NM_008942.3"/>
</dbReference>
<dbReference type="SMR" id="Q11011"/>
<dbReference type="BioGRID" id="202409">
    <property type="interactions" value="23"/>
</dbReference>
<dbReference type="FunCoup" id="Q11011">
    <property type="interactions" value="2496"/>
</dbReference>
<dbReference type="IntAct" id="Q11011">
    <property type="interactions" value="6"/>
</dbReference>
<dbReference type="MINT" id="Q11011"/>
<dbReference type="STRING" id="10090.ENSMUSP00000001480"/>
<dbReference type="MEROPS" id="M01.010"/>
<dbReference type="GlyGen" id="Q11011">
    <property type="glycosylation" value="1 site, 1 O-linked glycan (1 site)"/>
</dbReference>
<dbReference type="iPTMnet" id="Q11011"/>
<dbReference type="MetOSite" id="Q11011"/>
<dbReference type="PhosphoSitePlus" id="Q11011"/>
<dbReference type="SwissPalm" id="Q11011"/>
<dbReference type="jPOST" id="Q11011"/>
<dbReference type="PaxDb" id="10090-ENSMUSP00000001480"/>
<dbReference type="PeptideAtlas" id="Q11011"/>
<dbReference type="ProteomicsDB" id="291537"/>
<dbReference type="Pumba" id="Q11011"/>
<dbReference type="Antibodypedia" id="8552">
    <property type="antibodies" value="267 antibodies from 28 providers"/>
</dbReference>
<dbReference type="DNASU" id="19155"/>
<dbReference type="Ensembl" id="ENSMUST00000001480.14">
    <property type="protein sequence ID" value="ENSMUSP00000001480.8"/>
    <property type="gene ID" value="ENSMUSG00000001441.14"/>
</dbReference>
<dbReference type="GeneID" id="19155"/>
<dbReference type="KEGG" id="mmu:19155"/>
<dbReference type="UCSC" id="uc007ldv.2">
    <property type="organism name" value="mouse"/>
</dbReference>
<dbReference type="AGR" id="MGI:1101358"/>
<dbReference type="CTD" id="9520"/>
<dbReference type="MGI" id="MGI:1101358">
    <property type="gene designation" value="Npepps"/>
</dbReference>
<dbReference type="VEuPathDB" id="HostDB:ENSMUSG00000001441"/>
<dbReference type="eggNOG" id="KOG1046">
    <property type="taxonomic scope" value="Eukaryota"/>
</dbReference>
<dbReference type="GeneTree" id="ENSGT00940000155246"/>
<dbReference type="InParanoid" id="Q11011"/>
<dbReference type="OMA" id="MMEYVAI"/>
<dbReference type="OrthoDB" id="275509at2759"/>
<dbReference type="PhylomeDB" id="Q11011"/>
<dbReference type="TreeFam" id="TF300395"/>
<dbReference type="Reactome" id="R-MMU-983168">
    <property type="pathway name" value="Antigen processing: Ubiquitination &amp; Proteasome degradation"/>
</dbReference>
<dbReference type="BioGRID-ORCS" id="19155">
    <property type="hits" value="4 hits in 78 CRISPR screens"/>
</dbReference>
<dbReference type="ChiTaRS" id="Npepps">
    <property type="organism name" value="mouse"/>
</dbReference>
<dbReference type="PRO" id="PR:Q11011"/>
<dbReference type="Proteomes" id="UP000000589">
    <property type="component" value="Chromosome 11"/>
</dbReference>
<dbReference type="RNAct" id="Q11011">
    <property type="molecule type" value="protein"/>
</dbReference>
<dbReference type="Bgee" id="ENSMUSG00000001441">
    <property type="expression patterns" value="Expressed in rostral migratory stream and 275 other cell types or tissues"/>
</dbReference>
<dbReference type="ExpressionAtlas" id="Q11011">
    <property type="expression patterns" value="baseline and differential"/>
</dbReference>
<dbReference type="GO" id="GO:0005829">
    <property type="term" value="C:cytosol"/>
    <property type="evidence" value="ECO:0007669"/>
    <property type="project" value="UniProtKB-SubCell"/>
</dbReference>
<dbReference type="GO" id="GO:0005634">
    <property type="term" value="C:nucleus"/>
    <property type="evidence" value="ECO:0007669"/>
    <property type="project" value="UniProtKB-SubCell"/>
</dbReference>
<dbReference type="GO" id="GO:0016285">
    <property type="term" value="F:alanyl aminopeptidase activity"/>
    <property type="evidence" value="ECO:0007669"/>
    <property type="project" value="UniProtKB-EC"/>
</dbReference>
<dbReference type="GO" id="GO:0008237">
    <property type="term" value="F:metallopeptidase activity"/>
    <property type="evidence" value="ECO:0007669"/>
    <property type="project" value="UniProtKB-KW"/>
</dbReference>
<dbReference type="GO" id="GO:0008270">
    <property type="term" value="F:zinc ion binding"/>
    <property type="evidence" value="ECO:0007669"/>
    <property type="project" value="InterPro"/>
</dbReference>
<dbReference type="GO" id="GO:0071456">
    <property type="term" value="P:cellular response to hypoxia"/>
    <property type="evidence" value="ECO:0007669"/>
    <property type="project" value="Ensembl"/>
</dbReference>
<dbReference type="GO" id="GO:0006508">
    <property type="term" value="P:proteolysis"/>
    <property type="evidence" value="ECO:0007669"/>
    <property type="project" value="UniProtKB-KW"/>
</dbReference>
<dbReference type="CDD" id="cd09601">
    <property type="entry name" value="M1_APN-Q_like"/>
    <property type="match status" value="1"/>
</dbReference>
<dbReference type="FunFam" id="1.10.390.10:FF:000001">
    <property type="entry name" value="Aminopeptidase"/>
    <property type="match status" value="1"/>
</dbReference>
<dbReference type="FunFam" id="1.25.50.20:FF:000004">
    <property type="entry name" value="Aminopeptidase"/>
    <property type="match status" value="1"/>
</dbReference>
<dbReference type="FunFam" id="2.60.40.1730:FF:000002">
    <property type="entry name" value="Aminopeptidase"/>
    <property type="match status" value="1"/>
</dbReference>
<dbReference type="FunFam" id="2.60.40.1910:FF:000002">
    <property type="entry name" value="Aminopeptidase"/>
    <property type="match status" value="1"/>
</dbReference>
<dbReference type="Gene3D" id="1.25.50.20">
    <property type="match status" value="1"/>
</dbReference>
<dbReference type="Gene3D" id="2.60.40.1910">
    <property type="match status" value="1"/>
</dbReference>
<dbReference type="Gene3D" id="1.10.390.10">
    <property type="entry name" value="Neutral Protease Domain 2"/>
    <property type="match status" value="1"/>
</dbReference>
<dbReference type="Gene3D" id="2.60.40.1730">
    <property type="entry name" value="tricorn interacting facor f3 domain"/>
    <property type="match status" value="1"/>
</dbReference>
<dbReference type="InterPro" id="IPR045357">
    <property type="entry name" value="Aminopeptidase_N-like_N"/>
</dbReference>
<dbReference type="InterPro" id="IPR042097">
    <property type="entry name" value="Aminopeptidase_N-like_N_sf"/>
</dbReference>
<dbReference type="InterPro" id="IPR024571">
    <property type="entry name" value="ERAP1-like_C_dom"/>
</dbReference>
<dbReference type="InterPro" id="IPR034016">
    <property type="entry name" value="M1_APN-typ"/>
</dbReference>
<dbReference type="InterPro" id="IPR001930">
    <property type="entry name" value="Peptidase_M1"/>
</dbReference>
<dbReference type="InterPro" id="IPR050344">
    <property type="entry name" value="Peptidase_M1_aminopeptidases"/>
</dbReference>
<dbReference type="InterPro" id="IPR014782">
    <property type="entry name" value="Peptidase_M1_dom"/>
</dbReference>
<dbReference type="InterPro" id="IPR027268">
    <property type="entry name" value="Peptidase_M4/M1_CTD_sf"/>
</dbReference>
<dbReference type="PANTHER" id="PTHR11533">
    <property type="entry name" value="PROTEASE M1 ZINC METALLOPROTEASE"/>
    <property type="match status" value="1"/>
</dbReference>
<dbReference type="PANTHER" id="PTHR11533:SF174">
    <property type="entry name" value="PUROMYCIN-SENSITIVE AMINOPEPTIDASE-RELATED"/>
    <property type="match status" value="1"/>
</dbReference>
<dbReference type="Pfam" id="PF11838">
    <property type="entry name" value="ERAP1_C"/>
    <property type="match status" value="1"/>
</dbReference>
<dbReference type="Pfam" id="PF01433">
    <property type="entry name" value="Peptidase_M1"/>
    <property type="match status" value="1"/>
</dbReference>
<dbReference type="Pfam" id="PF17900">
    <property type="entry name" value="Peptidase_M1_N"/>
    <property type="match status" value="1"/>
</dbReference>
<dbReference type="PRINTS" id="PR00756">
    <property type="entry name" value="ALADIPTASE"/>
</dbReference>
<dbReference type="SUPFAM" id="SSF63737">
    <property type="entry name" value="Leukotriene A4 hydrolase N-terminal domain"/>
    <property type="match status" value="1"/>
</dbReference>
<dbReference type="SUPFAM" id="SSF55486">
    <property type="entry name" value="Metalloproteases ('zincins'), catalytic domain"/>
    <property type="match status" value="1"/>
</dbReference>
<dbReference type="PROSITE" id="PS00142">
    <property type="entry name" value="ZINC_PROTEASE"/>
    <property type="match status" value="1"/>
</dbReference>
<proteinExistence type="evidence at protein level"/>
<feature type="chain" id="PRO_0000095117" description="Puromycin-sensitive aminopeptidase">
    <location>
        <begin position="1"/>
        <end position="920"/>
    </location>
</feature>
<feature type="short sequence motif" description="Nuclear localization signal" evidence="2">
    <location>
        <begin position="727"/>
        <end position="731"/>
    </location>
</feature>
<feature type="active site" description="Proton acceptor" evidence="3">
    <location>
        <position position="354"/>
    </location>
</feature>
<feature type="binding site" evidence="1">
    <location>
        <position position="181"/>
    </location>
    <ligand>
        <name>substrate</name>
    </ligand>
</feature>
<feature type="binding site" evidence="1">
    <location>
        <begin position="317"/>
        <end position="321"/>
    </location>
    <ligand>
        <name>substrate</name>
    </ligand>
</feature>
<feature type="binding site" evidence="3">
    <location>
        <position position="353"/>
    </location>
    <ligand>
        <name>Zn(2+)</name>
        <dbReference type="ChEBI" id="CHEBI:29105"/>
        <note>catalytic</note>
    </ligand>
</feature>
<feature type="binding site" evidence="3">
    <location>
        <position position="357"/>
    </location>
    <ligand>
        <name>Zn(2+)</name>
        <dbReference type="ChEBI" id="CHEBI:29105"/>
        <note>catalytic</note>
    </ligand>
</feature>
<feature type="binding site" evidence="3">
    <location>
        <position position="376"/>
    </location>
    <ligand>
        <name>Zn(2+)</name>
        <dbReference type="ChEBI" id="CHEBI:29105"/>
        <note>catalytic</note>
    </ligand>
</feature>
<feature type="site" description="Transition state stabilizer" evidence="1">
    <location>
        <position position="439"/>
    </location>
</feature>
<feature type="modified residue" description="3'-nitrotyrosine" evidence="10">
    <location>
        <position position="465"/>
    </location>
</feature>
<feature type="sequence conflict" description="In Ref. 1; AAC52409." evidence="9" ref="1">
    <original>A</original>
    <variation>P</variation>
    <location>
        <position position="185"/>
    </location>
</feature>
<gene>
    <name type="primary">Npepps</name>
    <name type="synonym">Psa</name>
</gene>
<reference key="1">
    <citation type="journal article" date="1995" name="J. Biol. Chem.">
        <title>Puromycin-sensitive aminopeptidase. Sequence analysis, expression, and functional characterization.</title>
        <authorList>
            <person name="Constam D.B."/>
            <person name="Tobler A.R."/>
            <person name="Rensing-Ehl A."/>
            <person name="Kemler I."/>
            <person name="Hersh L.B."/>
            <person name="Fontana A."/>
        </authorList>
    </citation>
    <scope>NUCLEOTIDE SEQUENCE [MRNA]</scope>
    <scope>FUNCTION</scope>
    <scope>SUBCELLULAR LOCATION</scope>
    <scope>TISSUE SPECIFICITY</scope>
</reference>
<reference key="2">
    <citation type="journal article" date="2009" name="PLoS Biol.">
        <title>Lineage-specific biology revealed by a finished genome assembly of the mouse.</title>
        <authorList>
            <person name="Church D.M."/>
            <person name="Goodstadt L."/>
            <person name="Hillier L.W."/>
            <person name="Zody M.C."/>
            <person name="Goldstein S."/>
            <person name="She X."/>
            <person name="Bult C.J."/>
            <person name="Agarwala R."/>
            <person name="Cherry J.L."/>
            <person name="DiCuccio M."/>
            <person name="Hlavina W."/>
            <person name="Kapustin Y."/>
            <person name="Meric P."/>
            <person name="Maglott D."/>
            <person name="Birtle Z."/>
            <person name="Marques A.C."/>
            <person name="Graves T."/>
            <person name="Zhou S."/>
            <person name="Teague B."/>
            <person name="Potamousis K."/>
            <person name="Churas C."/>
            <person name="Place M."/>
            <person name="Herschleb J."/>
            <person name="Runnheim R."/>
            <person name="Forrest D."/>
            <person name="Amos-Landgraf J."/>
            <person name="Schwartz D.C."/>
            <person name="Cheng Z."/>
            <person name="Lindblad-Toh K."/>
            <person name="Eichler E.E."/>
            <person name="Ponting C.P."/>
        </authorList>
    </citation>
    <scope>NUCLEOTIDE SEQUENCE [LARGE SCALE GENOMIC DNA]</scope>
    <source>
        <strain>C57BL/6J</strain>
    </source>
</reference>
<reference key="3">
    <citation type="submission" date="2005-07" db="EMBL/GenBank/DDBJ databases">
        <authorList>
            <person name="Mural R.J."/>
            <person name="Adams M.D."/>
            <person name="Myers E.W."/>
            <person name="Smith H.O."/>
            <person name="Venter J.C."/>
        </authorList>
    </citation>
    <scope>NUCLEOTIDE SEQUENCE [LARGE SCALE GENOMIC DNA]</scope>
</reference>
<reference key="4">
    <citation type="journal article" date="2004" name="Genome Res.">
        <title>The status, quality, and expansion of the NIH full-length cDNA project: the Mammalian Gene Collection (MGC).</title>
        <authorList>
            <consortium name="The MGC Project Team"/>
        </authorList>
    </citation>
    <scope>NUCLEOTIDE SEQUENCE [LARGE SCALE MRNA]</scope>
    <source>
        <strain>C57BL/6J</strain>
        <strain>FVB/N</strain>
        <tissue>Brain</tissue>
        <tissue>Mammary tumor</tissue>
    </source>
</reference>
<reference key="5">
    <citation type="journal article" date="2005" name="Science">
        <title>The transcriptional landscape of the mammalian genome.</title>
        <authorList>
            <person name="Carninci P."/>
            <person name="Kasukawa T."/>
            <person name="Katayama S."/>
            <person name="Gough J."/>
            <person name="Frith M.C."/>
            <person name="Maeda N."/>
            <person name="Oyama R."/>
            <person name="Ravasi T."/>
            <person name="Lenhard B."/>
            <person name="Wells C."/>
            <person name="Kodzius R."/>
            <person name="Shimokawa K."/>
            <person name="Bajic V.B."/>
            <person name="Brenner S.E."/>
            <person name="Batalov S."/>
            <person name="Forrest A.R."/>
            <person name="Zavolan M."/>
            <person name="Davis M.J."/>
            <person name="Wilming L.G."/>
            <person name="Aidinis V."/>
            <person name="Allen J.E."/>
            <person name="Ambesi-Impiombato A."/>
            <person name="Apweiler R."/>
            <person name="Aturaliya R.N."/>
            <person name="Bailey T.L."/>
            <person name="Bansal M."/>
            <person name="Baxter L."/>
            <person name="Beisel K.W."/>
            <person name="Bersano T."/>
            <person name="Bono H."/>
            <person name="Chalk A.M."/>
            <person name="Chiu K.P."/>
            <person name="Choudhary V."/>
            <person name="Christoffels A."/>
            <person name="Clutterbuck D.R."/>
            <person name="Crowe M.L."/>
            <person name="Dalla E."/>
            <person name="Dalrymple B.P."/>
            <person name="de Bono B."/>
            <person name="Della Gatta G."/>
            <person name="di Bernardo D."/>
            <person name="Down T."/>
            <person name="Engstrom P."/>
            <person name="Fagiolini M."/>
            <person name="Faulkner G."/>
            <person name="Fletcher C.F."/>
            <person name="Fukushima T."/>
            <person name="Furuno M."/>
            <person name="Futaki S."/>
            <person name="Gariboldi M."/>
            <person name="Georgii-Hemming P."/>
            <person name="Gingeras T.R."/>
            <person name="Gojobori T."/>
            <person name="Green R.E."/>
            <person name="Gustincich S."/>
            <person name="Harbers M."/>
            <person name="Hayashi Y."/>
            <person name="Hensch T.K."/>
            <person name="Hirokawa N."/>
            <person name="Hill D."/>
            <person name="Huminiecki L."/>
            <person name="Iacono M."/>
            <person name="Ikeo K."/>
            <person name="Iwama A."/>
            <person name="Ishikawa T."/>
            <person name="Jakt M."/>
            <person name="Kanapin A."/>
            <person name="Katoh M."/>
            <person name="Kawasawa Y."/>
            <person name="Kelso J."/>
            <person name="Kitamura H."/>
            <person name="Kitano H."/>
            <person name="Kollias G."/>
            <person name="Krishnan S.P."/>
            <person name="Kruger A."/>
            <person name="Kummerfeld S.K."/>
            <person name="Kurochkin I.V."/>
            <person name="Lareau L.F."/>
            <person name="Lazarevic D."/>
            <person name="Lipovich L."/>
            <person name="Liu J."/>
            <person name="Liuni S."/>
            <person name="McWilliam S."/>
            <person name="Madan Babu M."/>
            <person name="Madera M."/>
            <person name="Marchionni L."/>
            <person name="Matsuda H."/>
            <person name="Matsuzawa S."/>
            <person name="Miki H."/>
            <person name="Mignone F."/>
            <person name="Miyake S."/>
            <person name="Morris K."/>
            <person name="Mottagui-Tabar S."/>
            <person name="Mulder N."/>
            <person name="Nakano N."/>
            <person name="Nakauchi H."/>
            <person name="Ng P."/>
            <person name="Nilsson R."/>
            <person name="Nishiguchi S."/>
            <person name="Nishikawa S."/>
            <person name="Nori F."/>
            <person name="Ohara O."/>
            <person name="Okazaki Y."/>
            <person name="Orlando V."/>
            <person name="Pang K.C."/>
            <person name="Pavan W.J."/>
            <person name="Pavesi G."/>
            <person name="Pesole G."/>
            <person name="Petrovsky N."/>
            <person name="Piazza S."/>
            <person name="Reed J."/>
            <person name="Reid J.F."/>
            <person name="Ring B.Z."/>
            <person name="Ringwald M."/>
            <person name="Rost B."/>
            <person name="Ruan Y."/>
            <person name="Salzberg S.L."/>
            <person name="Sandelin A."/>
            <person name="Schneider C."/>
            <person name="Schoenbach C."/>
            <person name="Sekiguchi K."/>
            <person name="Semple C.A."/>
            <person name="Seno S."/>
            <person name="Sessa L."/>
            <person name="Sheng Y."/>
            <person name="Shibata Y."/>
            <person name="Shimada H."/>
            <person name="Shimada K."/>
            <person name="Silva D."/>
            <person name="Sinclair B."/>
            <person name="Sperling S."/>
            <person name="Stupka E."/>
            <person name="Sugiura K."/>
            <person name="Sultana R."/>
            <person name="Takenaka Y."/>
            <person name="Taki K."/>
            <person name="Tammoja K."/>
            <person name="Tan S.L."/>
            <person name="Tang S."/>
            <person name="Taylor M.S."/>
            <person name="Tegner J."/>
            <person name="Teichmann S.A."/>
            <person name="Ueda H.R."/>
            <person name="van Nimwegen E."/>
            <person name="Verardo R."/>
            <person name="Wei C.L."/>
            <person name="Yagi K."/>
            <person name="Yamanishi H."/>
            <person name="Zabarovsky E."/>
            <person name="Zhu S."/>
            <person name="Zimmer A."/>
            <person name="Hide W."/>
            <person name="Bult C."/>
            <person name="Grimmond S.M."/>
            <person name="Teasdale R.D."/>
            <person name="Liu E.T."/>
            <person name="Brusic V."/>
            <person name="Quackenbush J."/>
            <person name="Wahlestedt C."/>
            <person name="Mattick J.S."/>
            <person name="Hume D.A."/>
            <person name="Kai C."/>
            <person name="Sasaki D."/>
            <person name="Tomaru Y."/>
            <person name="Fukuda S."/>
            <person name="Kanamori-Katayama M."/>
            <person name="Suzuki M."/>
            <person name="Aoki J."/>
            <person name="Arakawa T."/>
            <person name="Iida J."/>
            <person name="Imamura K."/>
            <person name="Itoh M."/>
            <person name="Kato T."/>
            <person name="Kawaji H."/>
            <person name="Kawagashira N."/>
            <person name="Kawashima T."/>
            <person name="Kojima M."/>
            <person name="Kondo S."/>
            <person name="Konno H."/>
            <person name="Nakano K."/>
            <person name="Ninomiya N."/>
            <person name="Nishio T."/>
            <person name="Okada M."/>
            <person name="Plessy C."/>
            <person name="Shibata K."/>
            <person name="Shiraki T."/>
            <person name="Suzuki S."/>
            <person name="Tagami M."/>
            <person name="Waki K."/>
            <person name="Watahiki A."/>
            <person name="Okamura-Oho Y."/>
            <person name="Suzuki H."/>
            <person name="Kawai J."/>
            <person name="Hayashizaki Y."/>
        </authorList>
    </citation>
    <scope>NUCLEOTIDE SEQUENCE [LARGE SCALE MRNA] OF 26-920</scope>
    <source>
        <strain>C57BL/6J</strain>
        <tissue>Embryo</tissue>
    </source>
</reference>
<reference key="6">
    <citation type="journal article" date="1999" name="J. Neurosci.">
        <title>Increased anxiety and impaired pain response in puromycin-sensitive aminopeptidase gene-deficient mice obtained by a mouse gene-trap method.</title>
        <authorList>
            <person name="Osada T."/>
            <person name="Ikegami S."/>
            <person name="Takiguchi-Hayashi K."/>
            <person name="Yamazaki Y."/>
            <person name="Katoh-Fukui Y."/>
            <person name="Higashinakagawa T."/>
            <person name="Sakaki Y."/>
            <person name="Takeuchi T."/>
        </authorList>
    </citation>
    <scope>TISSUE SPECIFICITY</scope>
    <scope>DISRUPTION PHENOTYPE</scope>
</reference>
<reference key="7">
    <citation type="journal article" date="2001" name="Mol. Endocrinol.">
        <title>Puromycin-sensitive aminopeptidase is essential for the maternal recognition of pregnancy in mice.</title>
        <authorList>
            <person name="Osada T."/>
            <person name="Watanabe G."/>
            <person name="Sakaki Y."/>
            <person name="Takeuchi T."/>
        </authorList>
    </citation>
    <scope>DISRUPTION PHENOTYPE</scope>
</reference>
<reference key="8">
    <citation type="journal article" date="2001" name="Mol. Endocrinol.">
        <title>Male reproductive defects caused by puromycin-sensitive aminopeptidase deficiency in mice.</title>
        <authorList>
            <person name="Osada T."/>
            <person name="Watanabe G."/>
            <person name="Kondo S."/>
            <person name="Toyoda M."/>
            <person name="Sakaki Y."/>
            <person name="Takeuchi T."/>
        </authorList>
    </citation>
    <scope>TISSUE SPECIFICITY</scope>
    <scope>DISRUPTION PHENOTYPE</scope>
</reference>
<reference key="9">
    <citation type="journal article" date="2006" name="Biochemistry">
        <title>Endogenously nitrated proteins in mouse brain: links to neurodegenerative disease.</title>
        <authorList>
            <person name="Sacksteder C.A."/>
            <person name="Qian W.-J."/>
            <person name="Knyushko T.V."/>
            <person name="Wang H."/>
            <person name="Chin M.H."/>
            <person name="Lacan G."/>
            <person name="Melega W.P."/>
            <person name="Camp D.G. II"/>
            <person name="Smith R.D."/>
            <person name="Smith D.J."/>
            <person name="Squier T.C."/>
            <person name="Bigelow D.J."/>
        </authorList>
    </citation>
    <scope>NITRATION [LARGE SCALE ANALYSIS] AT TYR-465</scope>
    <scope>IDENTIFICATION BY MASS SPECTROMETRY [LARGE SCALE ANALYSIS]</scope>
    <source>
        <tissue>Brain</tissue>
    </source>
</reference>
<reference key="10">
    <citation type="journal article" date="2008" name="J. Immunol.">
        <title>Puromycin-sensitive aminopeptidase limits MHC class I presentation in dendritic cells but does not affect CD8 T cell responses during viral infections.</title>
        <authorList>
            <person name="Towne C.F."/>
            <person name="York I.A."/>
            <person name="Neijssen J."/>
            <person name="Karow M.L."/>
            <person name="Murphy A.J."/>
            <person name="Valenzuela D.M."/>
            <person name="Yancopoulos G.D."/>
            <person name="Neefjes J.J."/>
            <person name="Rock K.L."/>
        </authorList>
    </citation>
    <scope>DISRUPTION PHENOTYPE</scope>
</reference>
<reference key="11">
    <citation type="journal article" date="2010" name="Cell">
        <title>A tissue-specific atlas of mouse protein phosphorylation and expression.</title>
        <authorList>
            <person name="Huttlin E.L."/>
            <person name="Jedrychowski M.P."/>
            <person name="Elias J.E."/>
            <person name="Goswami T."/>
            <person name="Rad R."/>
            <person name="Beausoleil S.A."/>
            <person name="Villen J."/>
            <person name="Haas W."/>
            <person name="Sowa M.E."/>
            <person name="Gygi S.P."/>
        </authorList>
    </citation>
    <scope>IDENTIFICATION BY MASS SPECTROMETRY [LARGE SCALE ANALYSIS]</scope>
    <source>
        <tissue>Brain</tissue>
        <tissue>Brown adipose tissue</tissue>
        <tissue>Heart</tissue>
        <tissue>Kidney</tissue>
        <tissue>Liver</tissue>
        <tissue>Lung</tissue>
        <tissue>Pancreas</tissue>
        <tissue>Spleen</tissue>
        <tissue>Testis</tissue>
    </source>
</reference>
<name>PSA_MOUSE</name>
<protein>
    <recommendedName>
        <fullName>Puromycin-sensitive aminopeptidase</fullName>
        <shortName>PSA</shortName>
        <ecNumber>3.4.11.14</ecNumber>
    </recommendedName>
    <alternativeName>
        <fullName>Cytosol alanyl aminopeptidase</fullName>
        <shortName>AAP-S</shortName>
    </alternativeName>
</protein>
<accession>Q11011</accession>
<accession>Q3UZE0</accession>
<accession>Q5PR74</accession>
<accession>Q91VJ8</accession>